<proteinExistence type="evidence at protein level"/>
<keyword id="KW-0997">Cell inner membrane</keyword>
<keyword id="KW-1003">Cell membrane</keyword>
<keyword id="KW-0472">Membrane</keyword>
<keyword id="KW-1185">Reference proteome</keyword>
<keyword id="KW-0812">Transmembrane</keyword>
<keyword id="KW-1133">Transmembrane helix</keyword>
<keyword id="KW-0813">Transport</keyword>
<feature type="chain" id="PRO_0000060261" description="Glutathione transport system permease protein GsiC">
    <location>
        <begin position="1"/>
        <end position="306"/>
    </location>
</feature>
<feature type="topological domain" description="Cytoplasmic" evidence="6">
    <location>
        <begin position="1"/>
        <end position="8"/>
    </location>
</feature>
<feature type="transmembrane region" description="Helical" evidence="2">
    <location>
        <begin position="9"/>
        <end position="29"/>
    </location>
</feature>
<feature type="topological domain" description="Periplasmic" evidence="6">
    <location>
        <begin position="30"/>
        <end position="102"/>
    </location>
</feature>
<feature type="transmembrane region" description="Helical" evidence="2">
    <location>
        <begin position="103"/>
        <end position="123"/>
    </location>
</feature>
<feature type="topological domain" description="Cytoplasmic" evidence="6">
    <location>
        <begin position="124"/>
        <end position="134"/>
    </location>
</feature>
<feature type="transmembrane region" description="Helical" evidence="2">
    <location>
        <begin position="135"/>
        <end position="155"/>
    </location>
</feature>
<feature type="topological domain" description="Periplasmic" evidence="6">
    <location>
        <begin position="156"/>
        <end position="168"/>
    </location>
</feature>
<feature type="transmembrane region" description="Helical" evidence="2">
    <location>
        <begin position="169"/>
        <end position="189"/>
    </location>
</feature>
<feature type="topological domain" description="Cytoplasmic" evidence="6">
    <location>
        <begin position="190"/>
        <end position="228"/>
    </location>
</feature>
<feature type="transmembrane region" description="Helical" evidence="2">
    <location>
        <begin position="229"/>
        <end position="249"/>
    </location>
</feature>
<feature type="topological domain" description="Periplasmic" evidence="6">
    <location>
        <begin position="250"/>
        <end position="277"/>
    </location>
</feature>
<feature type="transmembrane region" description="Helical" evidence="2">
    <location>
        <begin position="278"/>
        <end position="298"/>
    </location>
</feature>
<feature type="topological domain" description="Cytoplasmic" evidence="3">
    <location>
        <begin position="299"/>
        <end position="306"/>
    </location>
</feature>
<feature type="domain" description="ABC transmembrane type-1" evidence="2">
    <location>
        <begin position="95"/>
        <end position="292"/>
    </location>
</feature>
<sequence length="306" mass="34066">MLNYVIKRLLGLIPTLFIVSVLVFLFVHMLPGDPARLIAGPEADAQVIELVRQQLGLDQPLYHQFWHYISNAVQGDFGLSMVSRRPVADEIASRFMPTLWLTITSMVWAVIFGMAAGIIAAVWRNRWPDRLSMTIAVSGISFPAFALGMLLIQVFSVELGWLPTVGADSWQHYILPSLTLGAAVAAVMARFTRASFVDVLSEDYMRTARAKGVSETWVVLKHGLRNAMIPVVTMMGLQFGFLLGGSIVVEKVFNWPGLGRLLVDSVEMRDYPVIQAEILLFSLEFILINLVVDVLYAAINPAIRYK</sequence>
<dbReference type="EMBL" id="U00096">
    <property type="protein sequence ID" value="AAC73918.1"/>
    <property type="molecule type" value="Genomic_DNA"/>
</dbReference>
<dbReference type="EMBL" id="AP009048">
    <property type="protein sequence ID" value="BAA35526.1"/>
    <property type="molecule type" value="Genomic_DNA"/>
</dbReference>
<dbReference type="PIR" id="G64820">
    <property type="entry name" value="G64820"/>
</dbReference>
<dbReference type="RefSeq" id="NP_415352.1">
    <property type="nucleotide sequence ID" value="NC_000913.3"/>
</dbReference>
<dbReference type="RefSeq" id="WP_000936043.1">
    <property type="nucleotide sequence ID" value="NZ_STEB01000019.1"/>
</dbReference>
<dbReference type="SMR" id="P75798"/>
<dbReference type="BioGRID" id="4259983">
    <property type="interactions" value="15"/>
</dbReference>
<dbReference type="ComplexPortal" id="CPX-4325">
    <property type="entry name" value="Glutathione ABC transporter complex"/>
</dbReference>
<dbReference type="FunCoup" id="P75798">
    <property type="interactions" value="271"/>
</dbReference>
<dbReference type="IntAct" id="P75798">
    <property type="interactions" value="2"/>
</dbReference>
<dbReference type="STRING" id="511145.b0831"/>
<dbReference type="TCDB" id="3.A.1.5.11">
    <property type="family name" value="the atp-binding cassette (abc) superfamily"/>
</dbReference>
<dbReference type="PaxDb" id="511145-b0831"/>
<dbReference type="EnsemblBacteria" id="AAC73918">
    <property type="protein sequence ID" value="AAC73918"/>
    <property type="gene ID" value="b0831"/>
</dbReference>
<dbReference type="GeneID" id="86863342"/>
<dbReference type="GeneID" id="945460"/>
<dbReference type="KEGG" id="ecj:JW0815"/>
<dbReference type="KEGG" id="eco:b0831"/>
<dbReference type="KEGG" id="ecoc:C3026_05210"/>
<dbReference type="PATRIC" id="fig|1411691.4.peg.1447"/>
<dbReference type="EchoBASE" id="EB3247"/>
<dbReference type="eggNOG" id="COG0601">
    <property type="taxonomic scope" value="Bacteria"/>
</dbReference>
<dbReference type="HOGENOM" id="CLU_036879_0_0_6"/>
<dbReference type="InParanoid" id="P75798"/>
<dbReference type="OMA" id="WPGMGTF"/>
<dbReference type="OrthoDB" id="9805855at2"/>
<dbReference type="PhylomeDB" id="P75798"/>
<dbReference type="BioCyc" id="EcoCyc:YLIC-MONOMER"/>
<dbReference type="BioCyc" id="MetaCyc:YLIC-MONOMER"/>
<dbReference type="BRENDA" id="7.4.2.10">
    <property type="organism ID" value="2026"/>
</dbReference>
<dbReference type="PRO" id="PR:P75798"/>
<dbReference type="Proteomes" id="UP000000625">
    <property type="component" value="Chromosome"/>
</dbReference>
<dbReference type="GO" id="GO:0055052">
    <property type="term" value="C:ATP-binding cassette (ABC) transporter complex, substrate-binding subunit-containing"/>
    <property type="evidence" value="ECO:0000303"/>
    <property type="project" value="ComplexPortal"/>
</dbReference>
<dbReference type="GO" id="GO:0016020">
    <property type="term" value="C:membrane"/>
    <property type="evidence" value="ECO:0000303"/>
    <property type="project" value="ComplexPortal"/>
</dbReference>
<dbReference type="GO" id="GO:0005886">
    <property type="term" value="C:plasma membrane"/>
    <property type="evidence" value="ECO:0000314"/>
    <property type="project" value="EcoCyc"/>
</dbReference>
<dbReference type="GO" id="GO:0034634">
    <property type="term" value="F:glutathione transmembrane transporter activity"/>
    <property type="evidence" value="ECO:0000269"/>
    <property type="project" value="EcoCyc"/>
</dbReference>
<dbReference type="GO" id="GO:0034775">
    <property type="term" value="P:glutathione transmembrane transport"/>
    <property type="evidence" value="ECO:0000269"/>
    <property type="project" value="EcoCyc"/>
</dbReference>
<dbReference type="CDD" id="cd06261">
    <property type="entry name" value="TM_PBP2"/>
    <property type="match status" value="1"/>
</dbReference>
<dbReference type="FunFam" id="1.10.3720.10:FF:000024">
    <property type="entry name" value="Glutathione ABC transporter permease GsiC"/>
    <property type="match status" value="1"/>
</dbReference>
<dbReference type="Gene3D" id="1.10.3720.10">
    <property type="entry name" value="MetI-like"/>
    <property type="match status" value="1"/>
</dbReference>
<dbReference type="InterPro" id="IPR045621">
    <property type="entry name" value="BPD_transp_1_N"/>
</dbReference>
<dbReference type="InterPro" id="IPR000515">
    <property type="entry name" value="MetI-like"/>
</dbReference>
<dbReference type="InterPro" id="IPR035906">
    <property type="entry name" value="MetI-like_sf"/>
</dbReference>
<dbReference type="NCBIfam" id="NF011661">
    <property type="entry name" value="PRK15081.1"/>
    <property type="match status" value="1"/>
</dbReference>
<dbReference type="PANTHER" id="PTHR43163">
    <property type="entry name" value="DIPEPTIDE TRANSPORT SYSTEM PERMEASE PROTEIN DPPB-RELATED"/>
    <property type="match status" value="1"/>
</dbReference>
<dbReference type="PANTHER" id="PTHR43163:SF5">
    <property type="entry name" value="GLUTATHIONE TRANSPORT SYSTEM PERMEASE PROTEIN GSIC"/>
    <property type="match status" value="1"/>
</dbReference>
<dbReference type="Pfam" id="PF00528">
    <property type="entry name" value="BPD_transp_1"/>
    <property type="match status" value="1"/>
</dbReference>
<dbReference type="Pfam" id="PF19300">
    <property type="entry name" value="BPD_transp_1_N"/>
    <property type="match status" value="1"/>
</dbReference>
<dbReference type="SUPFAM" id="SSF161098">
    <property type="entry name" value="MetI-like"/>
    <property type="match status" value="1"/>
</dbReference>
<dbReference type="PROSITE" id="PS50928">
    <property type="entry name" value="ABC_TM1"/>
    <property type="match status" value="1"/>
</dbReference>
<protein>
    <recommendedName>
        <fullName evidence="6">Glutathione transport system permease protein GsiC</fullName>
    </recommendedName>
</protein>
<organism>
    <name type="scientific">Escherichia coli (strain K12)</name>
    <dbReference type="NCBI Taxonomy" id="83333"/>
    <lineage>
        <taxon>Bacteria</taxon>
        <taxon>Pseudomonadati</taxon>
        <taxon>Pseudomonadota</taxon>
        <taxon>Gammaproteobacteria</taxon>
        <taxon>Enterobacterales</taxon>
        <taxon>Enterobacteriaceae</taxon>
        <taxon>Escherichia</taxon>
    </lineage>
</organism>
<reference key="1">
    <citation type="journal article" date="1996" name="DNA Res.">
        <title>A 718-kb DNA sequence of the Escherichia coli K-12 genome corresponding to the 12.7-28.0 min region on the linkage map.</title>
        <authorList>
            <person name="Oshima T."/>
            <person name="Aiba H."/>
            <person name="Baba T."/>
            <person name="Fujita K."/>
            <person name="Hayashi K."/>
            <person name="Honjo A."/>
            <person name="Ikemoto K."/>
            <person name="Inada T."/>
            <person name="Itoh T."/>
            <person name="Kajihara M."/>
            <person name="Kanai K."/>
            <person name="Kashimoto K."/>
            <person name="Kimura S."/>
            <person name="Kitagawa M."/>
            <person name="Makino K."/>
            <person name="Masuda S."/>
            <person name="Miki T."/>
            <person name="Mizobuchi K."/>
            <person name="Mori H."/>
            <person name="Motomura K."/>
            <person name="Nakamura Y."/>
            <person name="Nashimoto H."/>
            <person name="Nishio Y."/>
            <person name="Saito N."/>
            <person name="Sampei G."/>
            <person name="Seki Y."/>
            <person name="Tagami H."/>
            <person name="Takemoto K."/>
            <person name="Wada C."/>
            <person name="Yamamoto Y."/>
            <person name="Yano M."/>
            <person name="Horiuchi T."/>
        </authorList>
    </citation>
    <scope>NUCLEOTIDE SEQUENCE [LARGE SCALE GENOMIC DNA]</scope>
    <source>
        <strain>K12 / W3110 / ATCC 27325 / DSM 5911</strain>
    </source>
</reference>
<reference key="2">
    <citation type="journal article" date="1997" name="Science">
        <title>The complete genome sequence of Escherichia coli K-12.</title>
        <authorList>
            <person name="Blattner F.R."/>
            <person name="Plunkett G. III"/>
            <person name="Bloch C.A."/>
            <person name="Perna N.T."/>
            <person name="Burland V."/>
            <person name="Riley M."/>
            <person name="Collado-Vides J."/>
            <person name="Glasner J.D."/>
            <person name="Rode C.K."/>
            <person name="Mayhew G.F."/>
            <person name="Gregor J."/>
            <person name="Davis N.W."/>
            <person name="Kirkpatrick H.A."/>
            <person name="Goeden M.A."/>
            <person name="Rose D.J."/>
            <person name="Mau B."/>
            <person name="Shao Y."/>
        </authorList>
    </citation>
    <scope>NUCLEOTIDE SEQUENCE [LARGE SCALE GENOMIC DNA]</scope>
    <source>
        <strain>K12 / MG1655 / ATCC 47076</strain>
    </source>
</reference>
<reference key="3">
    <citation type="journal article" date="2006" name="Mol. Syst. Biol.">
        <title>Highly accurate genome sequences of Escherichia coli K-12 strains MG1655 and W3110.</title>
        <authorList>
            <person name="Hayashi K."/>
            <person name="Morooka N."/>
            <person name="Yamamoto Y."/>
            <person name="Fujita K."/>
            <person name="Isono K."/>
            <person name="Choi S."/>
            <person name="Ohtsubo E."/>
            <person name="Baba T."/>
            <person name="Wanner B.L."/>
            <person name="Mori H."/>
            <person name="Horiuchi T."/>
        </authorList>
    </citation>
    <scope>NUCLEOTIDE SEQUENCE [LARGE SCALE GENOMIC DNA]</scope>
    <source>
        <strain>K12 / W3110 / ATCC 27325 / DSM 5911</strain>
    </source>
</reference>
<reference key="4">
    <citation type="journal article" date="2005" name="J. Bacteriol.">
        <title>The yliA, -B, -C, and -D genes of Escherichia coli K-12 encode a novel glutathione importer with an ATP-binding cassette.</title>
        <authorList>
            <person name="Suzuki H."/>
            <person name="Koyanagi T."/>
            <person name="Izuka S."/>
            <person name="Onishi A."/>
            <person name="Kumagai H."/>
        </authorList>
    </citation>
    <scope>FUNCTION IN GLUTATHIONE TRANSPORT</scope>
    <scope>SUBUNIT</scope>
    <source>
        <strain>K12 / MG1655 / ATCC 47076</strain>
    </source>
</reference>
<reference key="5">
    <citation type="journal article" date="2005" name="Science">
        <title>Global topology analysis of the Escherichia coli inner membrane proteome.</title>
        <authorList>
            <person name="Daley D.O."/>
            <person name="Rapp M."/>
            <person name="Granseth E."/>
            <person name="Melen K."/>
            <person name="Drew D."/>
            <person name="von Heijne G."/>
        </authorList>
    </citation>
    <scope>TOPOLOGY [LARGE SCALE ANALYSIS]</scope>
    <scope>SUBCELLULAR LOCATION</scope>
    <source>
        <strain>K12 / MG1655 / ATCC 47076</strain>
    </source>
</reference>
<reference key="6">
    <citation type="journal article" date="2018" name="Biomed. Res. Int.">
        <title>Purification and characterization of glutathione binding protein GsiB from Escherichia coli.</title>
        <authorList>
            <person name="Wang Z."/>
            <person name="Xia X."/>
            <person name="Zhang M."/>
            <person name="Fang J."/>
            <person name="Li Y."/>
            <person name="Zhang M."/>
        </authorList>
    </citation>
    <scope>INTERACTION WITH GSIB</scope>
    <source>
        <strain>K12 / MG1655 / ATCC 47076</strain>
    </source>
</reference>
<comment type="function">
    <text evidence="7">Part of the ABC transporter complex GsiABCD involved in glutathione import. Probably responsible for the translocation of the substrate across the membrane.</text>
</comment>
<comment type="subunit">
    <text evidence="4 7">The complex is composed of two ATP-binding proteins (GsiA), two transmembrane proteins (GsiC and GsiD) and a solute-binding protein (GsiB) (Probable). In the presence of glutathione, interacts with the glutathione-binding protein GsiB (PubMed:30515393).</text>
</comment>
<comment type="subcellular location">
    <subcellularLocation>
        <location evidence="3">Cell inner membrane</location>
        <topology evidence="1">Multi-pass membrane protein</topology>
    </subcellularLocation>
</comment>
<comment type="similarity">
    <text evidence="6">Belongs to the binding-protein-dependent transport system permease family.</text>
</comment>
<gene>
    <name evidence="5" type="primary">gsiC</name>
    <name type="synonym">yliC</name>
    <name type="ordered locus">b0831</name>
    <name type="ordered locus">JW0815</name>
</gene>
<name>GSIC_ECOLI</name>
<accession>P75798</accession>
<evidence type="ECO:0000255" key="1"/>
<evidence type="ECO:0000255" key="2">
    <source>
        <dbReference type="PROSITE-ProRule" id="PRU00441"/>
    </source>
</evidence>
<evidence type="ECO:0000269" key="3">
    <source>
    </source>
</evidence>
<evidence type="ECO:0000269" key="4">
    <source>
    </source>
</evidence>
<evidence type="ECO:0000303" key="5">
    <source>
    </source>
</evidence>
<evidence type="ECO:0000305" key="6"/>
<evidence type="ECO:0000305" key="7">
    <source>
    </source>
</evidence>